<evidence type="ECO:0000255" key="1">
    <source>
        <dbReference type="HAMAP-Rule" id="MF_01588"/>
    </source>
</evidence>
<protein>
    <recommendedName>
        <fullName evidence="1">DNA ligase</fullName>
        <ecNumber evidence="1">6.5.1.2</ecNumber>
    </recommendedName>
    <alternativeName>
        <fullName evidence="1">Polydeoxyribonucleotide synthase [NAD(+)]</fullName>
    </alternativeName>
</protein>
<feature type="chain" id="PRO_0000340387" description="DNA ligase">
    <location>
        <begin position="1"/>
        <end position="667"/>
    </location>
</feature>
<feature type="domain" description="BRCT" evidence="1">
    <location>
        <begin position="586"/>
        <end position="667"/>
    </location>
</feature>
<feature type="active site" description="N6-AMP-lysine intermediate" evidence="1">
    <location>
        <position position="112"/>
    </location>
</feature>
<feature type="binding site" evidence="1">
    <location>
        <begin position="32"/>
        <end position="36"/>
    </location>
    <ligand>
        <name>NAD(+)</name>
        <dbReference type="ChEBI" id="CHEBI:57540"/>
    </ligand>
</feature>
<feature type="binding site" evidence="1">
    <location>
        <begin position="81"/>
        <end position="82"/>
    </location>
    <ligand>
        <name>NAD(+)</name>
        <dbReference type="ChEBI" id="CHEBI:57540"/>
    </ligand>
</feature>
<feature type="binding site" evidence="1">
    <location>
        <position position="110"/>
    </location>
    <ligand>
        <name>NAD(+)</name>
        <dbReference type="ChEBI" id="CHEBI:57540"/>
    </ligand>
</feature>
<feature type="binding site" evidence="1">
    <location>
        <position position="133"/>
    </location>
    <ligand>
        <name>NAD(+)</name>
        <dbReference type="ChEBI" id="CHEBI:57540"/>
    </ligand>
</feature>
<feature type="binding site" evidence="1">
    <location>
        <position position="167"/>
    </location>
    <ligand>
        <name>NAD(+)</name>
        <dbReference type="ChEBI" id="CHEBI:57540"/>
    </ligand>
</feature>
<feature type="binding site" evidence="1">
    <location>
        <position position="283"/>
    </location>
    <ligand>
        <name>NAD(+)</name>
        <dbReference type="ChEBI" id="CHEBI:57540"/>
    </ligand>
</feature>
<feature type="binding site" evidence="1">
    <location>
        <position position="307"/>
    </location>
    <ligand>
        <name>NAD(+)</name>
        <dbReference type="ChEBI" id="CHEBI:57540"/>
    </ligand>
</feature>
<feature type="binding site" evidence="1">
    <location>
        <position position="401"/>
    </location>
    <ligand>
        <name>Zn(2+)</name>
        <dbReference type="ChEBI" id="CHEBI:29105"/>
    </ligand>
</feature>
<feature type="binding site" evidence="1">
    <location>
        <position position="404"/>
    </location>
    <ligand>
        <name>Zn(2+)</name>
        <dbReference type="ChEBI" id="CHEBI:29105"/>
    </ligand>
</feature>
<feature type="binding site" evidence="1">
    <location>
        <position position="419"/>
    </location>
    <ligand>
        <name>Zn(2+)</name>
        <dbReference type="ChEBI" id="CHEBI:29105"/>
    </ligand>
</feature>
<feature type="binding site" evidence="1">
    <location>
        <position position="424"/>
    </location>
    <ligand>
        <name>Zn(2+)</name>
        <dbReference type="ChEBI" id="CHEBI:29105"/>
    </ligand>
</feature>
<dbReference type="EC" id="6.5.1.2" evidence="1"/>
<dbReference type="EMBL" id="CP000703">
    <property type="protein sequence ID" value="ABQ49744.1"/>
    <property type="molecule type" value="Genomic_DNA"/>
</dbReference>
<dbReference type="RefSeq" id="WP_000774556.1">
    <property type="nucleotide sequence ID" value="NC_009487.1"/>
</dbReference>
<dbReference type="SMR" id="A5IU71"/>
<dbReference type="KEGG" id="saj:SaurJH9_1959"/>
<dbReference type="HOGENOM" id="CLU_007764_2_1_9"/>
<dbReference type="GO" id="GO:0005829">
    <property type="term" value="C:cytosol"/>
    <property type="evidence" value="ECO:0007669"/>
    <property type="project" value="TreeGrafter"/>
</dbReference>
<dbReference type="GO" id="GO:0003677">
    <property type="term" value="F:DNA binding"/>
    <property type="evidence" value="ECO:0007669"/>
    <property type="project" value="InterPro"/>
</dbReference>
<dbReference type="GO" id="GO:0003911">
    <property type="term" value="F:DNA ligase (NAD+) activity"/>
    <property type="evidence" value="ECO:0007669"/>
    <property type="project" value="UniProtKB-UniRule"/>
</dbReference>
<dbReference type="GO" id="GO:0046872">
    <property type="term" value="F:metal ion binding"/>
    <property type="evidence" value="ECO:0007669"/>
    <property type="project" value="UniProtKB-KW"/>
</dbReference>
<dbReference type="GO" id="GO:0006281">
    <property type="term" value="P:DNA repair"/>
    <property type="evidence" value="ECO:0007669"/>
    <property type="project" value="UniProtKB-KW"/>
</dbReference>
<dbReference type="GO" id="GO:0006260">
    <property type="term" value="P:DNA replication"/>
    <property type="evidence" value="ECO:0007669"/>
    <property type="project" value="UniProtKB-KW"/>
</dbReference>
<dbReference type="CDD" id="cd17748">
    <property type="entry name" value="BRCT_DNA_ligase_like"/>
    <property type="match status" value="1"/>
</dbReference>
<dbReference type="CDD" id="cd00114">
    <property type="entry name" value="LIGANc"/>
    <property type="match status" value="1"/>
</dbReference>
<dbReference type="FunFam" id="1.10.150.20:FF:000006">
    <property type="entry name" value="DNA ligase"/>
    <property type="match status" value="1"/>
</dbReference>
<dbReference type="FunFam" id="1.10.150.20:FF:000007">
    <property type="entry name" value="DNA ligase"/>
    <property type="match status" value="1"/>
</dbReference>
<dbReference type="FunFam" id="1.10.287.610:FF:000005">
    <property type="entry name" value="DNA ligase"/>
    <property type="match status" value="1"/>
</dbReference>
<dbReference type="FunFam" id="2.40.50.140:FF:000012">
    <property type="entry name" value="DNA ligase"/>
    <property type="match status" value="1"/>
</dbReference>
<dbReference type="FunFam" id="3.30.470.30:FF:000001">
    <property type="entry name" value="DNA ligase"/>
    <property type="match status" value="1"/>
</dbReference>
<dbReference type="FunFam" id="3.40.50.10190:FF:000045">
    <property type="entry name" value="DNA ligase"/>
    <property type="match status" value="1"/>
</dbReference>
<dbReference type="FunFam" id="6.20.10.30:FF:000002">
    <property type="entry name" value="DNA ligase"/>
    <property type="match status" value="1"/>
</dbReference>
<dbReference type="Gene3D" id="6.20.10.30">
    <property type="match status" value="1"/>
</dbReference>
<dbReference type="Gene3D" id="1.10.150.20">
    <property type="entry name" value="5' to 3' exonuclease, C-terminal subdomain"/>
    <property type="match status" value="2"/>
</dbReference>
<dbReference type="Gene3D" id="3.40.50.10190">
    <property type="entry name" value="BRCT domain"/>
    <property type="match status" value="1"/>
</dbReference>
<dbReference type="Gene3D" id="3.30.470.30">
    <property type="entry name" value="DNA ligase/mRNA capping enzyme"/>
    <property type="match status" value="1"/>
</dbReference>
<dbReference type="Gene3D" id="1.10.287.610">
    <property type="entry name" value="Helix hairpin bin"/>
    <property type="match status" value="1"/>
</dbReference>
<dbReference type="Gene3D" id="2.40.50.140">
    <property type="entry name" value="Nucleic acid-binding proteins"/>
    <property type="match status" value="1"/>
</dbReference>
<dbReference type="HAMAP" id="MF_01588">
    <property type="entry name" value="DNA_ligase_A"/>
    <property type="match status" value="1"/>
</dbReference>
<dbReference type="InterPro" id="IPR001357">
    <property type="entry name" value="BRCT_dom"/>
</dbReference>
<dbReference type="InterPro" id="IPR036420">
    <property type="entry name" value="BRCT_dom_sf"/>
</dbReference>
<dbReference type="InterPro" id="IPR041663">
    <property type="entry name" value="DisA/LigA_HHH"/>
</dbReference>
<dbReference type="InterPro" id="IPR001679">
    <property type="entry name" value="DNA_ligase"/>
</dbReference>
<dbReference type="InterPro" id="IPR018239">
    <property type="entry name" value="DNA_ligase_AS"/>
</dbReference>
<dbReference type="InterPro" id="IPR033136">
    <property type="entry name" value="DNA_ligase_CS"/>
</dbReference>
<dbReference type="InterPro" id="IPR013839">
    <property type="entry name" value="DNAligase_adenylation"/>
</dbReference>
<dbReference type="InterPro" id="IPR013840">
    <property type="entry name" value="DNAligase_N"/>
</dbReference>
<dbReference type="InterPro" id="IPR003583">
    <property type="entry name" value="Hlx-hairpin-Hlx_DNA-bd_motif"/>
</dbReference>
<dbReference type="InterPro" id="IPR012340">
    <property type="entry name" value="NA-bd_OB-fold"/>
</dbReference>
<dbReference type="InterPro" id="IPR004150">
    <property type="entry name" value="NAD_DNA_ligase_OB"/>
</dbReference>
<dbReference type="InterPro" id="IPR010994">
    <property type="entry name" value="RuvA_2-like"/>
</dbReference>
<dbReference type="InterPro" id="IPR004149">
    <property type="entry name" value="Znf_DNAligase_C4"/>
</dbReference>
<dbReference type="NCBIfam" id="TIGR00575">
    <property type="entry name" value="dnlj"/>
    <property type="match status" value="1"/>
</dbReference>
<dbReference type="NCBIfam" id="NF005932">
    <property type="entry name" value="PRK07956.1"/>
    <property type="match status" value="1"/>
</dbReference>
<dbReference type="PANTHER" id="PTHR23389">
    <property type="entry name" value="CHROMOSOME TRANSMISSION FIDELITY FACTOR 18"/>
    <property type="match status" value="1"/>
</dbReference>
<dbReference type="PANTHER" id="PTHR23389:SF9">
    <property type="entry name" value="DNA LIGASE"/>
    <property type="match status" value="1"/>
</dbReference>
<dbReference type="Pfam" id="PF00533">
    <property type="entry name" value="BRCT"/>
    <property type="match status" value="1"/>
</dbReference>
<dbReference type="Pfam" id="PF01653">
    <property type="entry name" value="DNA_ligase_aden"/>
    <property type="match status" value="1"/>
</dbReference>
<dbReference type="Pfam" id="PF03120">
    <property type="entry name" value="DNA_ligase_OB"/>
    <property type="match status" value="1"/>
</dbReference>
<dbReference type="Pfam" id="PF03119">
    <property type="entry name" value="DNA_ligase_ZBD"/>
    <property type="match status" value="1"/>
</dbReference>
<dbReference type="Pfam" id="PF12826">
    <property type="entry name" value="HHH_2"/>
    <property type="match status" value="1"/>
</dbReference>
<dbReference type="PIRSF" id="PIRSF001604">
    <property type="entry name" value="LigA"/>
    <property type="match status" value="1"/>
</dbReference>
<dbReference type="SMART" id="SM00292">
    <property type="entry name" value="BRCT"/>
    <property type="match status" value="1"/>
</dbReference>
<dbReference type="SMART" id="SM00278">
    <property type="entry name" value="HhH1"/>
    <property type="match status" value="3"/>
</dbReference>
<dbReference type="SMART" id="SM00532">
    <property type="entry name" value="LIGANc"/>
    <property type="match status" value="1"/>
</dbReference>
<dbReference type="SUPFAM" id="SSF52113">
    <property type="entry name" value="BRCT domain"/>
    <property type="match status" value="1"/>
</dbReference>
<dbReference type="SUPFAM" id="SSF56091">
    <property type="entry name" value="DNA ligase/mRNA capping enzyme, catalytic domain"/>
    <property type="match status" value="1"/>
</dbReference>
<dbReference type="SUPFAM" id="SSF50249">
    <property type="entry name" value="Nucleic acid-binding proteins"/>
    <property type="match status" value="1"/>
</dbReference>
<dbReference type="SUPFAM" id="SSF47781">
    <property type="entry name" value="RuvA domain 2-like"/>
    <property type="match status" value="1"/>
</dbReference>
<dbReference type="PROSITE" id="PS50172">
    <property type="entry name" value="BRCT"/>
    <property type="match status" value="1"/>
</dbReference>
<dbReference type="PROSITE" id="PS01055">
    <property type="entry name" value="DNA_LIGASE_N1"/>
    <property type="match status" value="1"/>
</dbReference>
<dbReference type="PROSITE" id="PS01056">
    <property type="entry name" value="DNA_LIGASE_N2"/>
    <property type="match status" value="1"/>
</dbReference>
<sequence>MADLSSRVNELHDLLNQYSYEYYVEDNPSVPDSEYDKLLHELIKIEEEHPEYKTVDSPTVRVGGEAQASFKKVNHDTPMLSLGNAFNEDDLRKFDQRIREQIGNVEYMCELKIDGLAVSLKYVDGYFVQGLTRGDGTTGEDITENLKTIHAIPLKMKEPLNVEVRGEAYMPRRSFLRLNEEKEKNDEQLFANPRNAAAGSLRQLDSKLTAKRKLSVFIYSVNDFTDFNARSQSEALDELDKLGFTTNKNRARVNNIDGVLEYIEKWTSQRESLPYDIDGIVIKVNDLDQQDEMGFTQKSPRWAIAYKFPAEEVVTKLLDIELSIGRTGVVTPTAILEPVKVAGTTVSRASLHNEDLIHDRDIRIGDSVVVKKAGDIIPEVVRSIPERRPEDAVTYHMPTHCPSCGHELVRIEGEVALRCINPKCQAQLVEGLIHFVSRQAMNIDGLGTKIIQQLYQSELIKDVADIFYLTEEDLLPLDRMGQKKVDNLLAAIQQAKDNSLENLLFGLGIRHLGVKASQVLAEKYETIDRLLTVTEAELVEIHDIGDKVAQSVVTYLENEDIRALIQKLKDKHVNMIYKGIKTSDIEGHPEFSGKTIVLTGKLHQMTRNEASKWLASQGAKVTSSVTKNTDVVIAGEDAGSKLTKAQSLGIEIWTEQQFVDKQNELNS</sequence>
<accession>A5IU71</accession>
<gene>
    <name evidence="1" type="primary">ligA</name>
    <name type="ordered locus">SaurJH9_1959</name>
</gene>
<name>DNLJ_STAA9</name>
<comment type="function">
    <text evidence="1">DNA ligase that catalyzes the formation of phosphodiester linkages between 5'-phosphoryl and 3'-hydroxyl groups in double-stranded DNA using NAD as a coenzyme and as the energy source for the reaction. It is essential for DNA replication and repair of damaged DNA.</text>
</comment>
<comment type="catalytic activity">
    <reaction evidence="1">
        <text>NAD(+) + (deoxyribonucleotide)n-3'-hydroxyl + 5'-phospho-(deoxyribonucleotide)m = (deoxyribonucleotide)n+m + AMP + beta-nicotinamide D-nucleotide.</text>
        <dbReference type="EC" id="6.5.1.2"/>
    </reaction>
</comment>
<comment type="cofactor">
    <cofactor evidence="1">
        <name>Mg(2+)</name>
        <dbReference type="ChEBI" id="CHEBI:18420"/>
    </cofactor>
    <cofactor evidence="1">
        <name>Mn(2+)</name>
        <dbReference type="ChEBI" id="CHEBI:29035"/>
    </cofactor>
</comment>
<comment type="similarity">
    <text evidence="1">Belongs to the NAD-dependent DNA ligase family. LigA subfamily.</text>
</comment>
<reference key="1">
    <citation type="submission" date="2007-05" db="EMBL/GenBank/DDBJ databases">
        <title>Complete sequence of chromosome of Staphylococcus aureus subsp. aureus JH9.</title>
        <authorList>
            <consortium name="US DOE Joint Genome Institute"/>
            <person name="Copeland A."/>
            <person name="Lucas S."/>
            <person name="Lapidus A."/>
            <person name="Barry K."/>
            <person name="Detter J.C."/>
            <person name="Glavina del Rio T."/>
            <person name="Hammon N."/>
            <person name="Israni S."/>
            <person name="Pitluck S."/>
            <person name="Chain P."/>
            <person name="Malfatti S."/>
            <person name="Shin M."/>
            <person name="Vergez L."/>
            <person name="Schmutz J."/>
            <person name="Larimer F."/>
            <person name="Land M."/>
            <person name="Hauser L."/>
            <person name="Kyrpides N."/>
            <person name="Kim E."/>
            <person name="Tomasz A."/>
            <person name="Richardson P."/>
        </authorList>
    </citation>
    <scope>NUCLEOTIDE SEQUENCE [LARGE SCALE GENOMIC DNA]</scope>
    <source>
        <strain>JH9</strain>
    </source>
</reference>
<keyword id="KW-0227">DNA damage</keyword>
<keyword id="KW-0234">DNA repair</keyword>
<keyword id="KW-0235">DNA replication</keyword>
<keyword id="KW-0436">Ligase</keyword>
<keyword id="KW-0460">Magnesium</keyword>
<keyword id="KW-0464">Manganese</keyword>
<keyword id="KW-0479">Metal-binding</keyword>
<keyword id="KW-0520">NAD</keyword>
<keyword id="KW-0862">Zinc</keyword>
<organism>
    <name type="scientific">Staphylococcus aureus (strain JH9)</name>
    <dbReference type="NCBI Taxonomy" id="359786"/>
    <lineage>
        <taxon>Bacteria</taxon>
        <taxon>Bacillati</taxon>
        <taxon>Bacillota</taxon>
        <taxon>Bacilli</taxon>
        <taxon>Bacillales</taxon>
        <taxon>Staphylococcaceae</taxon>
        <taxon>Staphylococcus</taxon>
    </lineage>
</organism>
<proteinExistence type="inferred from homology"/>